<evidence type="ECO:0000255" key="1"/>
<evidence type="ECO:0000305" key="2"/>
<reference key="1">
    <citation type="journal article" date="1992" name="FEMS Microbiol. Lett.">
        <title>Analysis of two gene regions involved in the expression of the imipenem-specific, outer membrane porin protein OprD of Pseudomonas aeruginosa.</title>
        <authorList>
            <person name="Huang H."/>
            <person name="Siehnel R.J."/>
            <person name="Bellido F."/>
            <person name="Rawling E."/>
            <person name="Hancock R.E.W."/>
        </authorList>
    </citation>
    <scope>NUCLEOTIDE SEQUENCE [GENOMIC DNA]</scope>
    <source>
        <strain>ATCC 15692 / PAO1 / H103</strain>
    </source>
</reference>
<reference key="2">
    <citation type="journal article" date="2000" name="Nature">
        <title>Complete genome sequence of Pseudomonas aeruginosa PAO1, an opportunistic pathogen.</title>
        <authorList>
            <person name="Stover C.K."/>
            <person name="Pham X.-Q.T."/>
            <person name="Erwin A.L."/>
            <person name="Mizoguchi S.D."/>
            <person name="Warrener P."/>
            <person name="Hickey M.J."/>
            <person name="Brinkman F.S.L."/>
            <person name="Hufnagle W.O."/>
            <person name="Kowalik D.J."/>
            <person name="Lagrou M."/>
            <person name="Garber R.L."/>
            <person name="Goltry L."/>
            <person name="Tolentino E."/>
            <person name="Westbrock-Wadman S."/>
            <person name="Yuan Y."/>
            <person name="Brody L.L."/>
            <person name="Coulter S.N."/>
            <person name="Folger K.R."/>
            <person name="Kas A."/>
            <person name="Larbig K."/>
            <person name="Lim R.M."/>
            <person name="Smith K.A."/>
            <person name="Spencer D.H."/>
            <person name="Wong G.K.-S."/>
            <person name="Wu Z."/>
            <person name="Paulsen I.T."/>
            <person name="Reizer J."/>
            <person name="Saier M.H. Jr."/>
            <person name="Hancock R.E.W."/>
            <person name="Lory S."/>
            <person name="Olson M.V."/>
        </authorList>
    </citation>
    <scope>NUCLEOTIDE SEQUENCE [LARGE SCALE GENOMIC DNA]</scope>
    <source>
        <strain>ATCC 15692 / DSM 22644 / CIP 104116 / JCM 14847 / LMG 12228 / 1C / PRS 101 / PAO1</strain>
    </source>
</reference>
<proteinExistence type="predicted"/>
<feature type="chain" id="PRO_0000058060" description="Transcription regulatory protein OpdE">
    <location>
        <begin position="1"/>
        <end position="402"/>
    </location>
</feature>
<feature type="transmembrane region" description="Helical" evidence="1">
    <location>
        <begin position="22"/>
        <end position="42"/>
    </location>
</feature>
<feature type="transmembrane region" description="Helical" evidence="1">
    <location>
        <begin position="60"/>
        <end position="80"/>
    </location>
</feature>
<feature type="transmembrane region" description="Helical" evidence="1">
    <location>
        <begin position="86"/>
        <end position="106"/>
    </location>
</feature>
<feature type="transmembrane region" description="Helical" evidence="1">
    <location>
        <begin position="108"/>
        <end position="128"/>
    </location>
</feature>
<feature type="transmembrane region" description="Helical" evidence="1">
    <location>
        <begin position="147"/>
        <end position="167"/>
    </location>
</feature>
<feature type="transmembrane region" description="Helical" evidence="1">
    <location>
        <begin position="170"/>
        <end position="190"/>
    </location>
</feature>
<feature type="transmembrane region" description="Helical" evidence="1">
    <location>
        <begin position="220"/>
        <end position="240"/>
    </location>
</feature>
<feature type="transmembrane region" description="Helical" evidence="1">
    <location>
        <begin position="256"/>
        <end position="276"/>
    </location>
</feature>
<feature type="transmembrane region" description="Helical" evidence="1">
    <location>
        <begin position="296"/>
        <end position="316"/>
    </location>
</feature>
<feature type="transmembrane region" description="Helical" evidence="1">
    <location>
        <begin position="318"/>
        <end position="338"/>
    </location>
</feature>
<feature type="transmembrane region" description="Helical" evidence="1">
    <location>
        <begin position="348"/>
        <end position="368"/>
    </location>
</feature>
<feature type="transmembrane region" description="Helical" evidence="1">
    <location>
        <begin position="375"/>
        <end position="395"/>
    </location>
</feature>
<dbReference type="EMBL" id="Z14064">
    <property type="protein sequence ID" value="CAA78446.1"/>
    <property type="molecule type" value="Genomic_DNA"/>
</dbReference>
<dbReference type="EMBL" id="AE004091">
    <property type="protein sequence ID" value="AAG05607.1"/>
    <property type="molecule type" value="Genomic_DNA"/>
</dbReference>
<dbReference type="PIR" id="S23860">
    <property type="entry name" value="S23860"/>
</dbReference>
<dbReference type="RefSeq" id="NP_250909.1">
    <property type="nucleotide sequence ID" value="NC_002516.2"/>
</dbReference>
<dbReference type="RefSeq" id="WP_003113706.1">
    <property type="nucleotide sequence ID" value="NZ_QZGE01000014.1"/>
</dbReference>
<dbReference type="SMR" id="Q01602"/>
<dbReference type="FunCoup" id="Q01602">
    <property type="interactions" value="108"/>
</dbReference>
<dbReference type="STRING" id="208964.PA2219"/>
<dbReference type="PaxDb" id="208964-PA2219"/>
<dbReference type="GeneID" id="878599"/>
<dbReference type="KEGG" id="pae:PA2219"/>
<dbReference type="PATRIC" id="fig|208964.12.peg.2323"/>
<dbReference type="PseudoCAP" id="PA2219"/>
<dbReference type="HOGENOM" id="CLU_001265_61_1_6"/>
<dbReference type="InParanoid" id="Q01602"/>
<dbReference type="OrthoDB" id="9812189at2"/>
<dbReference type="PhylomeDB" id="Q01602"/>
<dbReference type="BioCyc" id="PAER208964:G1FZ6-2259-MONOMER"/>
<dbReference type="Proteomes" id="UP000002438">
    <property type="component" value="Chromosome"/>
</dbReference>
<dbReference type="GO" id="GO:0005886">
    <property type="term" value="C:plasma membrane"/>
    <property type="evidence" value="ECO:0000318"/>
    <property type="project" value="GO_Central"/>
</dbReference>
<dbReference type="GO" id="GO:0022857">
    <property type="term" value="F:transmembrane transporter activity"/>
    <property type="evidence" value="ECO:0000318"/>
    <property type="project" value="GO_Central"/>
</dbReference>
<dbReference type="GO" id="GO:0055085">
    <property type="term" value="P:transmembrane transport"/>
    <property type="evidence" value="ECO:0000318"/>
    <property type="project" value="GO_Central"/>
</dbReference>
<dbReference type="CDD" id="cd17324">
    <property type="entry name" value="MFS_NepI_like"/>
    <property type="match status" value="1"/>
</dbReference>
<dbReference type="Gene3D" id="1.20.1250.20">
    <property type="entry name" value="MFS general substrate transporter like domains"/>
    <property type="match status" value="1"/>
</dbReference>
<dbReference type="InterPro" id="IPR011701">
    <property type="entry name" value="MFS"/>
</dbReference>
<dbReference type="InterPro" id="IPR020846">
    <property type="entry name" value="MFS_dom"/>
</dbReference>
<dbReference type="InterPro" id="IPR050189">
    <property type="entry name" value="MFS_Efflux_Transporters"/>
</dbReference>
<dbReference type="InterPro" id="IPR036259">
    <property type="entry name" value="MFS_trans_sf"/>
</dbReference>
<dbReference type="PANTHER" id="PTHR43124">
    <property type="entry name" value="PURINE EFFLUX PUMP PBUE"/>
    <property type="match status" value="1"/>
</dbReference>
<dbReference type="PANTHER" id="PTHR43124:SF5">
    <property type="entry name" value="PURINE RIBONUCLEOSIDE EFFLUX PUMP NEPI"/>
    <property type="match status" value="1"/>
</dbReference>
<dbReference type="Pfam" id="PF07690">
    <property type="entry name" value="MFS_1"/>
    <property type="match status" value="1"/>
</dbReference>
<dbReference type="SUPFAM" id="SSF103473">
    <property type="entry name" value="MFS general substrate transporter"/>
    <property type="match status" value="1"/>
</dbReference>
<dbReference type="PROSITE" id="PS50850">
    <property type="entry name" value="MFS"/>
    <property type="match status" value="1"/>
</dbReference>
<accession>Q01602</accession>
<organism>
    <name type="scientific">Pseudomonas aeruginosa (strain ATCC 15692 / DSM 22644 / CIP 104116 / JCM 14847 / LMG 12228 / 1C / PRS 101 / PAO1)</name>
    <dbReference type="NCBI Taxonomy" id="208964"/>
    <lineage>
        <taxon>Bacteria</taxon>
        <taxon>Pseudomonadati</taxon>
        <taxon>Pseudomonadota</taxon>
        <taxon>Gammaproteobacteria</taxon>
        <taxon>Pseudomonadales</taxon>
        <taxon>Pseudomonadaceae</taxon>
        <taxon>Pseudomonas</taxon>
    </lineage>
</organism>
<keyword id="KW-1003">Cell membrane</keyword>
<keyword id="KW-0472">Membrane</keyword>
<keyword id="KW-1185">Reference proteome</keyword>
<keyword id="KW-0804">Transcription</keyword>
<keyword id="KW-0805">Transcription regulation</keyword>
<keyword id="KW-0812">Transmembrane</keyword>
<keyword id="KW-1133">Transmembrane helix</keyword>
<gene>
    <name type="primary">opdE</name>
    <name type="ordered locus">PA2219</name>
</gene>
<sequence length="402" mass="41592">MTTRALDTANENPEQSGSWSGVLAIAVCAFALVASEFLPVSLLTPIANDLGTTEGMAGQGIAISGAFAVLTSLFISSVAGSLNRKTLLLGLTAAMGMSGAIVALAPNYFVYMLGRALIGIVIGGFWSMSAATAMRLVPANDVPRALALVNGGNALATVVAAPLGAWLGTLIGWRGAFLCLVPVALVALAWQWTTLPSMRAGARAPGPGNVFTVFALLKRPGVMLGMLASSLFFMGQFSLFTYVRPFLETVTGVHGAHVSLVLLVIGAAGFIGTLLIDRVLQRRFFQTLVAIPLLMALIALVLTVLGGWPAIVVVLLGLWGLTGTSAPVGWWAWIARVFPEDAEAGGGLFVAVVQLSIALGSTLGGLLFDRTGYQATFFASAAMLLIAAFLTILTARSKAPAG</sequence>
<comment type="function">
    <text>Regulates the expression of oprD which encodes the imipenem-specific porin.</text>
</comment>
<comment type="subcellular location">
    <subcellularLocation>
        <location evidence="2">Cell membrane</location>
        <topology evidence="2">Multi-pass membrane protein</topology>
    </subcellularLocation>
</comment>
<comment type="similarity">
    <text evidence="2">To B.subtilis YwfA.</text>
</comment>
<name>OPDE_PSEAE</name>
<protein>
    <recommendedName>
        <fullName>Transcription regulatory protein OpdE</fullName>
    </recommendedName>
</protein>